<reference key="1">
    <citation type="journal article" date="1992" name="Mol. Microbiol.">
        <title>The fliA (rpoF) gene of Pseudomonas aeruginosa encodes an alternative sigma factor required for flagellin synthesis.</title>
        <authorList>
            <person name="Starnbach M.N."/>
            <person name="Lory S."/>
        </authorList>
    </citation>
    <scope>NUCLEOTIDE SEQUENCE [GENOMIC DNA]</scope>
    <scope>FUNCTION</scope>
</reference>
<reference key="2">
    <citation type="journal article" date="2000" name="Nature">
        <title>Complete genome sequence of Pseudomonas aeruginosa PAO1, an opportunistic pathogen.</title>
        <authorList>
            <person name="Stover C.K."/>
            <person name="Pham X.-Q.T."/>
            <person name="Erwin A.L."/>
            <person name="Mizoguchi S.D."/>
            <person name="Warrener P."/>
            <person name="Hickey M.J."/>
            <person name="Brinkman F.S.L."/>
            <person name="Hufnagle W.O."/>
            <person name="Kowalik D.J."/>
            <person name="Lagrou M."/>
            <person name="Garber R.L."/>
            <person name="Goltry L."/>
            <person name="Tolentino E."/>
            <person name="Westbrock-Wadman S."/>
            <person name="Yuan Y."/>
            <person name="Brody L.L."/>
            <person name="Coulter S.N."/>
            <person name="Folger K.R."/>
            <person name="Kas A."/>
            <person name="Larbig K."/>
            <person name="Lim R.M."/>
            <person name="Smith K.A."/>
            <person name="Spencer D.H."/>
            <person name="Wong G.K.-S."/>
            <person name="Wu Z."/>
            <person name="Paulsen I.T."/>
            <person name="Reizer J."/>
            <person name="Saier M.H. Jr."/>
            <person name="Hancock R.E.W."/>
            <person name="Lory S."/>
            <person name="Olson M.V."/>
        </authorList>
    </citation>
    <scope>NUCLEOTIDE SEQUENCE [LARGE SCALE GENOMIC DNA]</scope>
    <source>
        <strain>ATCC 15692 / DSM 22644 / CIP 104116 / JCM 14847 / LMG 12228 / 1C / PRS 101 / PAO1</strain>
    </source>
</reference>
<evidence type="ECO:0000255" key="1">
    <source>
        <dbReference type="HAMAP-Rule" id="MF_00962"/>
    </source>
</evidence>
<evidence type="ECO:0000269" key="2">
    <source>
    </source>
</evidence>
<organism>
    <name type="scientific">Pseudomonas aeruginosa (strain ATCC 15692 / DSM 22644 / CIP 104116 / JCM 14847 / LMG 12228 / 1C / PRS 101 / PAO1)</name>
    <dbReference type="NCBI Taxonomy" id="208964"/>
    <lineage>
        <taxon>Bacteria</taxon>
        <taxon>Pseudomonadati</taxon>
        <taxon>Pseudomonadota</taxon>
        <taxon>Gammaproteobacteria</taxon>
        <taxon>Pseudomonadales</taxon>
        <taxon>Pseudomonadaceae</taxon>
        <taxon>Pseudomonas</taxon>
    </lineage>
</organism>
<keyword id="KW-0963">Cytoplasm</keyword>
<keyword id="KW-0238">DNA-binding</keyword>
<keyword id="KW-1185">Reference proteome</keyword>
<keyword id="KW-0731">Sigma factor</keyword>
<keyword id="KW-0804">Transcription</keyword>
<keyword id="KW-0805">Transcription regulation</keyword>
<proteinExistence type="inferred from homology"/>
<comment type="function">
    <text evidence="1 2">Sigma factors are initiation factors that promote the attachment of RNA polymerase to specific initiation sites and are then released. This sigma factor controls the expression of flagella-related genes (By similarity). Required for the flagellin gene (fliC) expression.</text>
</comment>
<comment type="subcellular location">
    <subcellularLocation>
        <location evidence="1">Cytoplasm</location>
    </subcellularLocation>
</comment>
<comment type="similarity">
    <text evidence="1">Belongs to the sigma-70 factor family. FliA subfamily.</text>
</comment>
<gene>
    <name evidence="1" type="primary">fliA</name>
    <name type="synonym">rpoF</name>
    <name type="ordered locus">PA1455</name>
</gene>
<name>FLIA_PSEAE</name>
<protein>
    <recommendedName>
        <fullName evidence="1">RNA polymerase sigma factor FliA</fullName>
    </recommendedName>
    <alternativeName>
        <fullName evidence="1">RNA polymerase sigma factor for flagellar operon</fullName>
    </alternativeName>
    <alternativeName>
        <fullName evidence="1">Sigma F</fullName>
    </alternativeName>
    <alternativeName>
        <fullName evidence="1">Sigma-28</fullName>
    </alternativeName>
</protein>
<sequence>MTAASGVRMYSKAQAQNSQEQLIQRYAPLVKRIAYHLLGRLPASVQVEDLMQAGMIGLLEAAKKYDAGKGASFETYAGIRIRGAMLDEVRKGDWAPRSVHRNTRMVTDAIRAIEARTGRDAKDHEVAAELQLSLEDYYGILSDTQGSRLYSFDDLLQDGEHGLPEDTSLSHNEPIHGLLDERFQAALADAIAKLPERERLVLALYYDEELNLKEIGEVLGVSESRVSQLHSQCAARLRARLADWRSA</sequence>
<feature type="chain" id="PRO_0000093986" description="RNA polymerase sigma factor FliA">
    <location>
        <begin position="1"/>
        <end position="247"/>
    </location>
</feature>
<feature type="DNA-binding region" description="H-T-H motif" evidence="1">
    <location>
        <begin position="212"/>
        <end position="231"/>
    </location>
</feature>
<feature type="region of interest" description="Sigma-70 factor domain-2" evidence="1">
    <location>
        <begin position="22"/>
        <end position="94"/>
    </location>
</feature>
<feature type="region of interest" description="Sigma-70 factor domain-3" evidence="1">
    <location>
        <begin position="102"/>
        <end position="171"/>
    </location>
</feature>
<feature type="region of interest" description="Sigma-70 factor domain-4" evidence="1">
    <location>
        <begin position="190"/>
        <end position="238"/>
    </location>
</feature>
<feature type="short sequence motif" description="Interaction with polymerase core subunit RpoC">
    <location>
        <begin position="49"/>
        <end position="52"/>
    </location>
</feature>
<dbReference type="EMBL" id="X61231">
    <property type="protein sequence ID" value="CAA43548.1"/>
    <property type="molecule type" value="Genomic_DNA"/>
</dbReference>
<dbReference type="EMBL" id="AE004091">
    <property type="protein sequence ID" value="AAG04844.1"/>
    <property type="molecule type" value="Genomic_DNA"/>
</dbReference>
<dbReference type="PIR" id="S20544">
    <property type="entry name" value="S20544"/>
</dbReference>
<dbReference type="RefSeq" id="NP_250146.1">
    <property type="nucleotide sequence ID" value="NC_002516.2"/>
</dbReference>
<dbReference type="RefSeq" id="WP_003083070.1">
    <property type="nucleotide sequence ID" value="NZ_QZGE01000005.1"/>
</dbReference>
<dbReference type="SMR" id="P29248"/>
<dbReference type="FunCoup" id="P29248">
    <property type="interactions" value="362"/>
</dbReference>
<dbReference type="STRING" id="208964.PA1455"/>
<dbReference type="PaxDb" id="208964-PA1455"/>
<dbReference type="DNASU" id="881996"/>
<dbReference type="GeneID" id="77221924"/>
<dbReference type="GeneID" id="881996"/>
<dbReference type="KEGG" id="pae:PA1455"/>
<dbReference type="PATRIC" id="fig|208964.12.peg.1506"/>
<dbReference type="PseudoCAP" id="PA1455"/>
<dbReference type="HOGENOM" id="CLU_014793_8_1_6"/>
<dbReference type="InParanoid" id="P29248"/>
<dbReference type="OrthoDB" id="9799825at2"/>
<dbReference type="PhylomeDB" id="P29248"/>
<dbReference type="BioCyc" id="PAER208964:G1FZ6-1481-MONOMER"/>
<dbReference type="Proteomes" id="UP000002438">
    <property type="component" value="Chromosome"/>
</dbReference>
<dbReference type="GO" id="GO:0005737">
    <property type="term" value="C:cytoplasm"/>
    <property type="evidence" value="ECO:0007669"/>
    <property type="project" value="UniProtKB-SubCell"/>
</dbReference>
<dbReference type="GO" id="GO:0003677">
    <property type="term" value="F:DNA binding"/>
    <property type="evidence" value="ECO:0007669"/>
    <property type="project" value="UniProtKB-UniRule"/>
</dbReference>
<dbReference type="GO" id="GO:0003899">
    <property type="term" value="F:DNA-directed RNA polymerase activity"/>
    <property type="evidence" value="ECO:0007669"/>
    <property type="project" value="InterPro"/>
</dbReference>
<dbReference type="GO" id="GO:0016987">
    <property type="term" value="F:sigma factor activity"/>
    <property type="evidence" value="ECO:0000318"/>
    <property type="project" value="GO_Central"/>
</dbReference>
<dbReference type="GO" id="GO:0006352">
    <property type="term" value="P:DNA-templated transcription initiation"/>
    <property type="evidence" value="ECO:0007669"/>
    <property type="project" value="UniProtKB-UniRule"/>
</dbReference>
<dbReference type="GO" id="GO:2000147">
    <property type="term" value="P:positive regulation of cell motility"/>
    <property type="evidence" value="ECO:0000315"/>
    <property type="project" value="PseudoCAP"/>
</dbReference>
<dbReference type="GO" id="GO:0006355">
    <property type="term" value="P:regulation of DNA-templated transcription"/>
    <property type="evidence" value="ECO:0000318"/>
    <property type="project" value="GO_Central"/>
</dbReference>
<dbReference type="CDD" id="cd06171">
    <property type="entry name" value="Sigma70_r4"/>
    <property type="match status" value="1"/>
</dbReference>
<dbReference type="FunFam" id="1.10.1740.10:FF:000002">
    <property type="entry name" value="RNA polymerase sigma factor FliA"/>
    <property type="match status" value="1"/>
</dbReference>
<dbReference type="FunFam" id="1.20.140.160:FF:000001">
    <property type="entry name" value="RNA polymerase sigma factor FliA"/>
    <property type="match status" value="1"/>
</dbReference>
<dbReference type="Gene3D" id="1.10.1740.10">
    <property type="match status" value="1"/>
</dbReference>
<dbReference type="Gene3D" id="1.20.140.160">
    <property type="match status" value="1"/>
</dbReference>
<dbReference type="HAMAP" id="MF_00962">
    <property type="entry name" value="Sigma70_FliA"/>
    <property type="match status" value="1"/>
</dbReference>
<dbReference type="InterPro" id="IPR014284">
    <property type="entry name" value="RNA_pol_sigma-70_dom"/>
</dbReference>
<dbReference type="InterPro" id="IPR000943">
    <property type="entry name" value="RNA_pol_sigma70"/>
</dbReference>
<dbReference type="InterPro" id="IPR007627">
    <property type="entry name" value="RNA_pol_sigma70_r2"/>
</dbReference>
<dbReference type="InterPro" id="IPR007624">
    <property type="entry name" value="RNA_pol_sigma70_r3"/>
</dbReference>
<dbReference type="InterPro" id="IPR007630">
    <property type="entry name" value="RNA_pol_sigma70_r4"/>
</dbReference>
<dbReference type="InterPro" id="IPR012845">
    <property type="entry name" value="RNA_pol_sigma_FliA_WhiG"/>
</dbReference>
<dbReference type="InterPro" id="IPR013325">
    <property type="entry name" value="RNA_pol_sigma_r2"/>
</dbReference>
<dbReference type="InterPro" id="IPR013324">
    <property type="entry name" value="RNA_pol_sigma_r3/r4-like"/>
</dbReference>
<dbReference type="InterPro" id="IPR028617">
    <property type="entry name" value="Sigma70_FliA"/>
</dbReference>
<dbReference type="NCBIfam" id="TIGR02479">
    <property type="entry name" value="FliA_WhiG"/>
    <property type="match status" value="1"/>
</dbReference>
<dbReference type="NCBIfam" id="NF005413">
    <property type="entry name" value="PRK06986.1"/>
    <property type="match status" value="1"/>
</dbReference>
<dbReference type="NCBIfam" id="TIGR02937">
    <property type="entry name" value="sigma70-ECF"/>
    <property type="match status" value="1"/>
</dbReference>
<dbReference type="PANTHER" id="PTHR30385:SF7">
    <property type="entry name" value="RNA POLYMERASE SIGMA FACTOR FLIA"/>
    <property type="match status" value="1"/>
</dbReference>
<dbReference type="PANTHER" id="PTHR30385">
    <property type="entry name" value="SIGMA FACTOR F FLAGELLAR"/>
    <property type="match status" value="1"/>
</dbReference>
<dbReference type="Pfam" id="PF04542">
    <property type="entry name" value="Sigma70_r2"/>
    <property type="match status" value="1"/>
</dbReference>
<dbReference type="Pfam" id="PF04539">
    <property type="entry name" value="Sigma70_r3"/>
    <property type="match status" value="1"/>
</dbReference>
<dbReference type="Pfam" id="PF04545">
    <property type="entry name" value="Sigma70_r4"/>
    <property type="match status" value="1"/>
</dbReference>
<dbReference type="PIRSF" id="PIRSF000770">
    <property type="entry name" value="RNA_pol_sigma-SigE/K"/>
    <property type="match status" value="1"/>
</dbReference>
<dbReference type="PRINTS" id="PR00046">
    <property type="entry name" value="SIGMA70FCT"/>
</dbReference>
<dbReference type="SUPFAM" id="SSF88946">
    <property type="entry name" value="Sigma2 domain of RNA polymerase sigma factors"/>
    <property type="match status" value="1"/>
</dbReference>
<dbReference type="SUPFAM" id="SSF88659">
    <property type="entry name" value="Sigma3 and sigma4 domains of RNA polymerase sigma factors"/>
    <property type="match status" value="2"/>
</dbReference>
<dbReference type="PROSITE" id="PS00715">
    <property type="entry name" value="SIGMA70_1"/>
    <property type="match status" value="1"/>
</dbReference>
<accession>P29248</accession>